<feature type="chain" id="PRO_0000284245" description="Endoribonuclease YbeY">
    <location>
        <begin position="1"/>
        <end position="177"/>
    </location>
</feature>
<feature type="binding site" evidence="1">
    <location>
        <position position="118"/>
    </location>
    <ligand>
        <name>Zn(2+)</name>
        <dbReference type="ChEBI" id="CHEBI:29105"/>
        <note>catalytic</note>
    </ligand>
</feature>
<feature type="binding site" evidence="1">
    <location>
        <position position="122"/>
    </location>
    <ligand>
        <name>Zn(2+)</name>
        <dbReference type="ChEBI" id="CHEBI:29105"/>
        <note>catalytic</note>
    </ligand>
</feature>
<feature type="binding site" evidence="1">
    <location>
        <position position="128"/>
    </location>
    <ligand>
        <name>Zn(2+)</name>
        <dbReference type="ChEBI" id="CHEBI:29105"/>
        <note>catalytic</note>
    </ligand>
</feature>
<accession>Q1B6C2</accession>
<evidence type="ECO:0000255" key="1">
    <source>
        <dbReference type="HAMAP-Rule" id="MF_00009"/>
    </source>
</evidence>
<sequence>MSIEVSNESGIDVSEEELISVARFVIEKMNVNPAAELSMVLLDTSSMADLHMRWMDLPGPTDVMSFPMDELEPGGRPDAPEPGPAMLGDIVLCPEFAAKQAETAGHSLGHELALLTVHGVLHLLGYDHAEPDEEKEMFALQRELLEEWVAHQVEAYHLDRQTERDRRLLDKSRYFDE</sequence>
<keyword id="KW-0963">Cytoplasm</keyword>
<keyword id="KW-0255">Endonuclease</keyword>
<keyword id="KW-0378">Hydrolase</keyword>
<keyword id="KW-0479">Metal-binding</keyword>
<keyword id="KW-0540">Nuclease</keyword>
<keyword id="KW-0690">Ribosome biogenesis</keyword>
<keyword id="KW-0698">rRNA processing</keyword>
<keyword id="KW-0862">Zinc</keyword>
<organism>
    <name type="scientific">Mycobacterium sp. (strain MCS)</name>
    <dbReference type="NCBI Taxonomy" id="164756"/>
    <lineage>
        <taxon>Bacteria</taxon>
        <taxon>Bacillati</taxon>
        <taxon>Actinomycetota</taxon>
        <taxon>Actinomycetes</taxon>
        <taxon>Mycobacteriales</taxon>
        <taxon>Mycobacteriaceae</taxon>
        <taxon>Mycobacterium</taxon>
    </lineage>
</organism>
<reference key="1">
    <citation type="submission" date="2006-06" db="EMBL/GenBank/DDBJ databases">
        <title>Complete sequence of chromosome of Mycobacterium sp. MCS.</title>
        <authorList>
            <consortium name="US DOE Joint Genome Institute"/>
            <person name="Copeland A."/>
            <person name="Lucas S."/>
            <person name="Lapidus A."/>
            <person name="Barry K."/>
            <person name="Detter J.C."/>
            <person name="Glavina del Rio T."/>
            <person name="Hammon N."/>
            <person name="Israni S."/>
            <person name="Dalin E."/>
            <person name="Tice H."/>
            <person name="Pitluck S."/>
            <person name="Martinez M."/>
            <person name="Schmutz J."/>
            <person name="Larimer F."/>
            <person name="Land M."/>
            <person name="Hauser L."/>
            <person name="Kyrpides N."/>
            <person name="Kim E."/>
            <person name="Miller C.D."/>
            <person name="Hughes J.E."/>
            <person name="Anderson A.J."/>
            <person name="Sims R.C."/>
            <person name="Richardson P."/>
        </authorList>
    </citation>
    <scope>NUCLEOTIDE SEQUENCE [LARGE SCALE GENOMIC DNA]</scope>
    <source>
        <strain>MCS</strain>
    </source>
</reference>
<gene>
    <name evidence="1" type="primary">ybeY</name>
    <name type="ordered locus">Mmcs_3455</name>
</gene>
<proteinExistence type="inferred from homology"/>
<dbReference type="EC" id="3.1.-.-" evidence="1"/>
<dbReference type="EMBL" id="CP000384">
    <property type="protein sequence ID" value="ABG09562.1"/>
    <property type="molecule type" value="Genomic_DNA"/>
</dbReference>
<dbReference type="SMR" id="Q1B6C2"/>
<dbReference type="KEGG" id="mmc:Mmcs_3455"/>
<dbReference type="HOGENOM" id="CLU_106710_3_2_11"/>
<dbReference type="BioCyc" id="MSP164756:G1G6O-3525-MONOMER"/>
<dbReference type="GO" id="GO:0005737">
    <property type="term" value="C:cytoplasm"/>
    <property type="evidence" value="ECO:0007669"/>
    <property type="project" value="UniProtKB-SubCell"/>
</dbReference>
<dbReference type="GO" id="GO:0004222">
    <property type="term" value="F:metalloendopeptidase activity"/>
    <property type="evidence" value="ECO:0007669"/>
    <property type="project" value="InterPro"/>
</dbReference>
<dbReference type="GO" id="GO:0004521">
    <property type="term" value="F:RNA endonuclease activity"/>
    <property type="evidence" value="ECO:0007669"/>
    <property type="project" value="UniProtKB-UniRule"/>
</dbReference>
<dbReference type="GO" id="GO:0008270">
    <property type="term" value="F:zinc ion binding"/>
    <property type="evidence" value="ECO:0007669"/>
    <property type="project" value="UniProtKB-UniRule"/>
</dbReference>
<dbReference type="GO" id="GO:0006364">
    <property type="term" value="P:rRNA processing"/>
    <property type="evidence" value="ECO:0007669"/>
    <property type="project" value="UniProtKB-UniRule"/>
</dbReference>
<dbReference type="Gene3D" id="3.40.390.30">
    <property type="entry name" value="Metalloproteases ('zincins'), catalytic domain"/>
    <property type="match status" value="1"/>
</dbReference>
<dbReference type="HAMAP" id="MF_00009">
    <property type="entry name" value="Endoribonucl_YbeY"/>
    <property type="match status" value="1"/>
</dbReference>
<dbReference type="InterPro" id="IPR023091">
    <property type="entry name" value="MetalPrtase_cat_dom_sf_prd"/>
</dbReference>
<dbReference type="InterPro" id="IPR002036">
    <property type="entry name" value="YbeY"/>
</dbReference>
<dbReference type="InterPro" id="IPR020549">
    <property type="entry name" value="YbeY_CS"/>
</dbReference>
<dbReference type="NCBIfam" id="TIGR00043">
    <property type="entry name" value="rRNA maturation RNase YbeY"/>
    <property type="match status" value="1"/>
</dbReference>
<dbReference type="PANTHER" id="PTHR46986">
    <property type="entry name" value="ENDORIBONUCLEASE YBEY, CHLOROPLASTIC"/>
    <property type="match status" value="1"/>
</dbReference>
<dbReference type="PANTHER" id="PTHR46986:SF1">
    <property type="entry name" value="ENDORIBONUCLEASE YBEY, CHLOROPLASTIC"/>
    <property type="match status" value="1"/>
</dbReference>
<dbReference type="Pfam" id="PF02130">
    <property type="entry name" value="YbeY"/>
    <property type="match status" value="1"/>
</dbReference>
<dbReference type="SUPFAM" id="SSF55486">
    <property type="entry name" value="Metalloproteases ('zincins'), catalytic domain"/>
    <property type="match status" value="1"/>
</dbReference>
<dbReference type="PROSITE" id="PS01306">
    <property type="entry name" value="UPF0054"/>
    <property type="match status" value="1"/>
</dbReference>
<protein>
    <recommendedName>
        <fullName evidence="1">Endoribonuclease YbeY</fullName>
        <ecNumber evidence="1">3.1.-.-</ecNumber>
    </recommendedName>
</protein>
<comment type="function">
    <text evidence="1">Single strand-specific metallo-endoribonuclease involved in late-stage 70S ribosome quality control and in maturation of the 3' terminus of the 16S rRNA.</text>
</comment>
<comment type="cofactor">
    <cofactor evidence="1">
        <name>Zn(2+)</name>
        <dbReference type="ChEBI" id="CHEBI:29105"/>
    </cofactor>
    <text evidence="1">Binds 1 zinc ion.</text>
</comment>
<comment type="subcellular location">
    <subcellularLocation>
        <location evidence="1">Cytoplasm</location>
    </subcellularLocation>
</comment>
<comment type="similarity">
    <text evidence="1">Belongs to the endoribonuclease YbeY family.</text>
</comment>
<name>YBEY_MYCSS</name>